<gene>
    <name evidence="1" type="primary">pyrB</name>
    <name type="ordered locus">CHU_0084</name>
</gene>
<reference key="1">
    <citation type="journal article" date="2007" name="Appl. Environ. Microbiol.">
        <title>Genome sequence of the cellulolytic gliding bacterium Cytophaga hutchinsonii.</title>
        <authorList>
            <person name="Xie G."/>
            <person name="Bruce D.C."/>
            <person name="Challacombe J.F."/>
            <person name="Chertkov O."/>
            <person name="Detter J.C."/>
            <person name="Gilna P."/>
            <person name="Han C.S."/>
            <person name="Lucas S."/>
            <person name="Misra M."/>
            <person name="Myers G.L."/>
            <person name="Richardson P."/>
            <person name="Tapia R."/>
            <person name="Thayer N."/>
            <person name="Thompson L.S."/>
            <person name="Brettin T.S."/>
            <person name="Henrissat B."/>
            <person name="Wilson D.B."/>
            <person name="McBride M.J."/>
        </authorList>
    </citation>
    <scope>NUCLEOTIDE SEQUENCE [LARGE SCALE GENOMIC DNA]</scope>
    <source>
        <strain>ATCC 33406 / DSM 1761 / JCM 20678 / CIP 103989 / IAM 12607 / NBRC 15051 / NCIMB 9469 / D465</strain>
    </source>
</reference>
<keyword id="KW-0665">Pyrimidine biosynthesis</keyword>
<keyword id="KW-1185">Reference proteome</keyword>
<keyword id="KW-0808">Transferase</keyword>
<evidence type="ECO:0000255" key="1">
    <source>
        <dbReference type="HAMAP-Rule" id="MF_00001"/>
    </source>
</evidence>
<accession>Q11YY8</accession>
<feature type="chain" id="PRO_0000301566" description="Aspartate carbamoyltransferase catalytic subunit">
    <location>
        <begin position="1"/>
        <end position="307"/>
    </location>
</feature>
<feature type="binding site" evidence="1">
    <location>
        <position position="59"/>
    </location>
    <ligand>
        <name>carbamoyl phosphate</name>
        <dbReference type="ChEBI" id="CHEBI:58228"/>
    </ligand>
</feature>
<feature type="binding site" evidence="1">
    <location>
        <position position="60"/>
    </location>
    <ligand>
        <name>carbamoyl phosphate</name>
        <dbReference type="ChEBI" id="CHEBI:58228"/>
    </ligand>
</feature>
<feature type="binding site" evidence="1">
    <location>
        <position position="87"/>
    </location>
    <ligand>
        <name>L-aspartate</name>
        <dbReference type="ChEBI" id="CHEBI:29991"/>
    </ligand>
</feature>
<feature type="binding site" evidence="1">
    <location>
        <position position="109"/>
    </location>
    <ligand>
        <name>carbamoyl phosphate</name>
        <dbReference type="ChEBI" id="CHEBI:58228"/>
    </ligand>
</feature>
<feature type="binding site" evidence="1">
    <location>
        <position position="137"/>
    </location>
    <ligand>
        <name>carbamoyl phosphate</name>
        <dbReference type="ChEBI" id="CHEBI:58228"/>
    </ligand>
</feature>
<feature type="binding site" evidence="1">
    <location>
        <position position="140"/>
    </location>
    <ligand>
        <name>carbamoyl phosphate</name>
        <dbReference type="ChEBI" id="CHEBI:58228"/>
    </ligand>
</feature>
<feature type="binding site" evidence="1">
    <location>
        <position position="170"/>
    </location>
    <ligand>
        <name>L-aspartate</name>
        <dbReference type="ChEBI" id="CHEBI:29991"/>
    </ligand>
</feature>
<feature type="binding site" evidence="1">
    <location>
        <position position="224"/>
    </location>
    <ligand>
        <name>L-aspartate</name>
        <dbReference type="ChEBI" id="CHEBI:29991"/>
    </ligand>
</feature>
<feature type="binding site" evidence="1">
    <location>
        <position position="265"/>
    </location>
    <ligand>
        <name>carbamoyl phosphate</name>
        <dbReference type="ChEBI" id="CHEBI:58228"/>
    </ligand>
</feature>
<feature type="binding site" evidence="1">
    <location>
        <position position="266"/>
    </location>
    <ligand>
        <name>carbamoyl phosphate</name>
        <dbReference type="ChEBI" id="CHEBI:58228"/>
    </ligand>
</feature>
<organism>
    <name type="scientific">Cytophaga hutchinsonii (strain ATCC 33406 / DSM 1761 / CIP 103989 / NBRC 15051 / NCIMB 9469 / D465)</name>
    <dbReference type="NCBI Taxonomy" id="269798"/>
    <lineage>
        <taxon>Bacteria</taxon>
        <taxon>Pseudomonadati</taxon>
        <taxon>Bacteroidota</taxon>
        <taxon>Cytophagia</taxon>
        <taxon>Cytophagales</taxon>
        <taxon>Cytophagaceae</taxon>
        <taxon>Cytophaga</taxon>
    </lineage>
</organism>
<name>PYRB_CYTH3</name>
<proteinExistence type="inferred from homology"/>
<sequence>MSQLSVKHLLGIKDLTTKDIELILETAGQFKEVINRPIKKVPSLRDVTIANVFFENSTRTRLSFELAQKRLSADTINFSAAASSVKKGETLLDTVNNILAMKVDMIVMRHASVGAPHFLAKHISANIVNAGDGTHEHPTQALLDSFSIKEKLGGVAGKKVCIFGDILHSRVALSNIFALQKQGAEVMVCGPSTLIPKFIGELGVKVEFDLRKALQWCDVANVLRIQLERQTIKYFPTLREYAQYYGINKQLLDSLNKEIVIMHPGPINRGVELSSDVADSGHSIILDQVENGVAVRMAVLYLLAGNK</sequence>
<dbReference type="EC" id="2.1.3.2" evidence="1"/>
<dbReference type="EMBL" id="CP000383">
    <property type="protein sequence ID" value="ABG57378.1"/>
    <property type="molecule type" value="Genomic_DNA"/>
</dbReference>
<dbReference type="RefSeq" id="WP_011583494.1">
    <property type="nucleotide sequence ID" value="NC_008255.1"/>
</dbReference>
<dbReference type="SMR" id="Q11YY8"/>
<dbReference type="STRING" id="269798.CHU_0084"/>
<dbReference type="KEGG" id="chu:CHU_0084"/>
<dbReference type="eggNOG" id="COG0540">
    <property type="taxonomic scope" value="Bacteria"/>
</dbReference>
<dbReference type="HOGENOM" id="CLU_043846_2_0_10"/>
<dbReference type="OrthoDB" id="9774690at2"/>
<dbReference type="UniPathway" id="UPA00070">
    <property type="reaction ID" value="UER00116"/>
</dbReference>
<dbReference type="Proteomes" id="UP000001822">
    <property type="component" value="Chromosome"/>
</dbReference>
<dbReference type="GO" id="GO:0016597">
    <property type="term" value="F:amino acid binding"/>
    <property type="evidence" value="ECO:0007669"/>
    <property type="project" value="InterPro"/>
</dbReference>
<dbReference type="GO" id="GO:0004070">
    <property type="term" value="F:aspartate carbamoyltransferase activity"/>
    <property type="evidence" value="ECO:0007669"/>
    <property type="project" value="UniProtKB-UniRule"/>
</dbReference>
<dbReference type="GO" id="GO:0006207">
    <property type="term" value="P:'de novo' pyrimidine nucleobase biosynthetic process"/>
    <property type="evidence" value="ECO:0007669"/>
    <property type="project" value="InterPro"/>
</dbReference>
<dbReference type="GO" id="GO:0044205">
    <property type="term" value="P:'de novo' UMP biosynthetic process"/>
    <property type="evidence" value="ECO:0007669"/>
    <property type="project" value="UniProtKB-UniRule"/>
</dbReference>
<dbReference type="GO" id="GO:0006520">
    <property type="term" value="P:amino acid metabolic process"/>
    <property type="evidence" value="ECO:0007669"/>
    <property type="project" value="InterPro"/>
</dbReference>
<dbReference type="Gene3D" id="3.40.50.1370">
    <property type="entry name" value="Aspartate/ornithine carbamoyltransferase"/>
    <property type="match status" value="2"/>
</dbReference>
<dbReference type="HAMAP" id="MF_00001">
    <property type="entry name" value="Asp_carb_tr"/>
    <property type="match status" value="1"/>
</dbReference>
<dbReference type="InterPro" id="IPR006132">
    <property type="entry name" value="Asp/Orn_carbamoyltranf_P-bd"/>
</dbReference>
<dbReference type="InterPro" id="IPR006130">
    <property type="entry name" value="Asp/Orn_carbamoylTrfase"/>
</dbReference>
<dbReference type="InterPro" id="IPR036901">
    <property type="entry name" value="Asp/Orn_carbamoylTrfase_sf"/>
</dbReference>
<dbReference type="InterPro" id="IPR002082">
    <property type="entry name" value="Asp_carbamoyltransf"/>
</dbReference>
<dbReference type="InterPro" id="IPR006131">
    <property type="entry name" value="Asp_carbamoyltransf_Asp/Orn-bd"/>
</dbReference>
<dbReference type="NCBIfam" id="TIGR00670">
    <property type="entry name" value="asp_carb_tr"/>
    <property type="match status" value="1"/>
</dbReference>
<dbReference type="NCBIfam" id="NF002032">
    <property type="entry name" value="PRK00856.1"/>
    <property type="match status" value="1"/>
</dbReference>
<dbReference type="PANTHER" id="PTHR45753:SF6">
    <property type="entry name" value="ASPARTATE CARBAMOYLTRANSFERASE"/>
    <property type="match status" value="1"/>
</dbReference>
<dbReference type="PANTHER" id="PTHR45753">
    <property type="entry name" value="ORNITHINE CARBAMOYLTRANSFERASE, MITOCHONDRIAL"/>
    <property type="match status" value="1"/>
</dbReference>
<dbReference type="Pfam" id="PF00185">
    <property type="entry name" value="OTCace"/>
    <property type="match status" value="1"/>
</dbReference>
<dbReference type="Pfam" id="PF02729">
    <property type="entry name" value="OTCace_N"/>
    <property type="match status" value="1"/>
</dbReference>
<dbReference type="PRINTS" id="PR00100">
    <property type="entry name" value="AOTCASE"/>
</dbReference>
<dbReference type="PRINTS" id="PR00101">
    <property type="entry name" value="ATCASE"/>
</dbReference>
<dbReference type="SUPFAM" id="SSF53671">
    <property type="entry name" value="Aspartate/ornithine carbamoyltransferase"/>
    <property type="match status" value="1"/>
</dbReference>
<dbReference type="PROSITE" id="PS00097">
    <property type="entry name" value="CARBAMOYLTRANSFERASE"/>
    <property type="match status" value="1"/>
</dbReference>
<comment type="function">
    <text evidence="1">Catalyzes the condensation of carbamoyl phosphate and aspartate to form carbamoyl aspartate and inorganic phosphate, the committed step in the de novo pyrimidine nucleotide biosynthesis pathway.</text>
</comment>
<comment type="catalytic activity">
    <reaction evidence="1">
        <text>carbamoyl phosphate + L-aspartate = N-carbamoyl-L-aspartate + phosphate + H(+)</text>
        <dbReference type="Rhea" id="RHEA:20013"/>
        <dbReference type="ChEBI" id="CHEBI:15378"/>
        <dbReference type="ChEBI" id="CHEBI:29991"/>
        <dbReference type="ChEBI" id="CHEBI:32814"/>
        <dbReference type="ChEBI" id="CHEBI:43474"/>
        <dbReference type="ChEBI" id="CHEBI:58228"/>
        <dbReference type="EC" id="2.1.3.2"/>
    </reaction>
</comment>
<comment type="pathway">
    <text evidence="1">Pyrimidine metabolism; UMP biosynthesis via de novo pathway; (S)-dihydroorotate from bicarbonate: step 2/3.</text>
</comment>
<comment type="subunit">
    <text evidence="1">Heterododecamer (2C3:3R2) of six catalytic PyrB chains organized as two trimers (C3), and six regulatory PyrI chains organized as three dimers (R2).</text>
</comment>
<comment type="similarity">
    <text evidence="1">Belongs to the aspartate/ornithine carbamoyltransferase superfamily. ATCase family.</text>
</comment>
<protein>
    <recommendedName>
        <fullName evidence="1">Aspartate carbamoyltransferase catalytic subunit</fullName>
        <ecNumber evidence="1">2.1.3.2</ecNumber>
    </recommendedName>
    <alternativeName>
        <fullName evidence="1">Aspartate transcarbamylase</fullName>
        <shortName evidence="1">ATCase</shortName>
    </alternativeName>
</protein>